<name>TRMFO_BRASO</name>
<organism>
    <name type="scientific">Bradyrhizobium sp. (strain ORS 278)</name>
    <dbReference type="NCBI Taxonomy" id="114615"/>
    <lineage>
        <taxon>Bacteria</taxon>
        <taxon>Pseudomonadati</taxon>
        <taxon>Pseudomonadota</taxon>
        <taxon>Alphaproteobacteria</taxon>
        <taxon>Hyphomicrobiales</taxon>
        <taxon>Nitrobacteraceae</taxon>
        <taxon>Bradyrhizobium</taxon>
    </lineage>
</organism>
<proteinExistence type="inferred from homology"/>
<feature type="chain" id="PRO_0000346326" description="Methylenetetrahydrofolate--tRNA-(uracil-5-)-methyltransferase TrmFO">
    <location>
        <begin position="1"/>
        <end position="465"/>
    </location>
</feature>
<feature type="binding site" evidence="1">
    <location>
        <begin position="3"/>
        <end position="8"/>
    </location>
    <ligand>
        <name>FAD</name>
        <dbReference type="ChEBI" id="CHEBI:57692"/>
    </ligand>
</feature>
<comment type="function">
    <text evidence="1">Catalyzes the folate-dependent formation of 5-methyl-uridine at position 54 (M-5-U54) in all tRNAs.</text>
</comment>
<comment type="catalytic activity">
    <reaction evidence="1">
        <text>uridine(54) in tRNA + (6R)-5,10-methylene-5,6,7,8-tetrahydrofolate + NADH + H(+) = 5-methyluridine(54) in tRNA + (6S)-5,6,7,8-tetrahydrofolate + NAD(+)</text>
        <dbReference type="Rhea" id="RHEA:16873"/>
        <dbReference type="Rhea" id="RHEA-COMP:10167"/>
        <dbReference type="Rhea" id="RHEA-COMP:10193"/>
        <dbReference type="ChEBI" id="CHEBI:15378"/>
        <dbReference type="ChEBI" id="CHEBI:15636"/>
        <dbReference type="ChEBI" id="CHEBI:57453"/>
        <dbReference type="ChEBI" id="CHEBI:57540"/>
        <dbReference type="ChEBI" id="CHEBI:57945"/>
        <dbReference type="ChEBI" id="CHEBI:65315"/>
        <dbReference type="ChEBI" id="CHEBI:74447"/>
        <dbReference type="EC" id="2.1.1.74"/>
    </reaction>
</comment>
<comment type="catalytic activity">
    <reaction evidence="1">
        <text>uridine(54) in tRNA + (6R)-5,10-methylene-5,6,7,8-tetrahydrofolate + NADPH + H(+) = 5-methyluridine(54) in tRNA + (6S)-5,6,7,8-tetrahydrofolate + NADP(+)</text>
        <dbReference type="Rhea" id="RHEA:62372"/>
        <dbReference type="Rhea" id="RHEA-COMP:10167"/>
        <dbReference type="Rhea" id="RHEA-COMP:10193"/>
        <dbReference type="ChEBI" id="CHEBI:15378"/>
        <dbReference type="ChEBI" id="CHEBI:15636"/>
        <dbReference type="ChEBI" id="CHEBI:57453"/>
        <dbReference type="ChEBI" id="CHEBI:57783"/>
        <dbReference type="ChEBI" id="CHEBI:58349"/>
        <dbReference type="ChEBI" id="CHEBI:65315"/>
        <dbReference type="ChEBI" id="CHEBI:74447"/>
        <dbReference type="EC" id="2.1.1.74"/>
    </reaction>
</comment>
<comment type="cofactor">
    <cofactor evidence="1">
        <name>FAD</name>
        <dbReference type="ChEBI" id="CHEBI:57692"/>
    </cofactor>
</comment>
<comment type="subcellular location">
    <subcellularLocation>
        <location evidence="1">Cytoplasm</location>
    </subcellularLocation>
</comment>
<comment type="similarity">
    <text evidence="1">Belongs to the MnmG family. TrmFO subfamily.</text>
</comment>
<protein>
    <recommendedName>
        <fullName evidence="1">Methylenetetrahydrofolate--tRNA-(uracil-5-)-methyltransferase TrmFO</fullName>
        <ecNumber evidence="1">2.1.1.74</ecNumber>
    </recommendedName>
    <alternativeName>
        <fullName evidence="1">Folate-dependent tRNA (uracil-5-)-methyltransferase</fullName>
    </alternativeName>
    <alternativeName>
        <fullName evidence="1">Folate-dependent tRNA(M-5-U54)-methyltransferase</fullName>
    </alternativeName>
</protein>
<dbReference type="EC" id="2.1.1.74" evidence="1"/>
<dbReference type="EMBL" id="CU234118">
    <property type="protein sequence ID" value="CAL77780.1"/>
    <property type="molecule type" value="Genomic_DNA"/>
</dbReference>
<dbReference type="SMR" id="A4YV54"/>
<dbReference type="STRING" id="114615.BRADO4028"/>
<dbReference type="KEGG" id="bra:BRADO4028"/>
<dbReference type="eggNOG" id="COG1206">
    <property type="taxonomic scope" value="Bacteria"/>
</dbReference>
<dbReference type="HOGENOM" id="CLU_033057_1_0_5"/>
<dbReference type="Proteomes" id="UP000001994">
    <property type="component" value="Chromosome"/>
</dbReference>
<dbReference type="GO" id="GO:0005829">
    <property type="term" value="C:cytosol"/>
    <property type="evidence" value="ECO:0007669"/>
    <property type="project" value="TreeGrafter"/>
</dbReference>
<dbReference type="GO" id="GO:0050660">
    <property type="term" value="F:flavin adenine dinucleotide binding"/>
    <property type="evidence" value="ECO:0007669"/>
    <property type="project" value="UniProtKB-UniRule"/>
</dbReference>
<dbReference type="GO" id="GO:0047151">
    <property type="term" value="F:tRNA (uracil(54)-C5)-methyltransferase activity, 5,10-methylenetetrahydrofolate-dependent"/>
    <property type="evidence" value="ECO:0007669"/>
    <property type="project" value="UniProtKB-UniRule"/>
</dbReference>
<dbReference type="GO" id="GO:0030488">
    <property type="term" value="P:tRNA methylation"/>
    <property type="evidence" value="ECO:0007669"/>
    <property type="project" value="TreeGrafter"/>
</dbReference>
<dbReference type="GO" id="GO:0002098">
    <property type="term" value="P:tRNA wobble uridine modification"/>
    <property type="evidence" value="ECO:0007669"/>
    <property type="project" value="TreeGrafter"/>
</dbReference>
<dbReference type="Gene3D" id="3.50.50.60">
    <property type="entry name" value="FAD/NAD(P)-binding domain"/>
    <property type="match status" value="2"/>
</dbReference>
<dbReference type="HAMAP" id="MF_01037">
    <property type="entry name" value="TrmFO"/>
    <property type="match status" value="1"/>
</dbReference>
<dbReference type="InterPro" id="IPR036188">
    <property type="entry name" value="FAD/NAD-bd_sf"/>
</dbReference>
<dbReference type="InterPro" id="IPR002218">
    <property type="entry name" value="MnmG-rel"/>
</dbReference>
<dbReference type="InterPro" id="IPR020595">
    <property type="entry name" value="MnmG-rel_CS"/>
</dbReference>
<dbReference type="InterPro" id="IPR040131">
    <property type="entry name" value="MnmG_N"/>
</dbReference>
<dbReference type="InterPro" id="IPR004417">
    <property type="entry name" value="TrmFO"/>
</dbReference>
<dbReference type="NCBIfam" id="TIGR00137">
    <property type="entry name" value="gid_trmFO"/>
    <property type="match status" value="1"/>
</dbReference>
<dbReference type="NCBIfam" id="NF003739">
    <property type="entry name" value="PRK05335.1"/>
    <property type="match status" value="1"/>
</dbReference>
<dbReference type="PANTHER" id="PTHR11806">
    <property type="entry name" value="GLUCOSE INHIBITED DIVISION PROTEIN A"/>
    <property type="match status" value="1"/>
</dbReference>
<dbReference type="PANTHER" id="PTHR11806:SF2">
    <property type="entry name" value="METHYLENETETRAHYDROFOLATE--TRNA-(URACIL-5-)-METHYLTRANSFERASE TRMFO"/>
    <property type="match status" value="1"/>
</dbReference>
<dbReference type="Pfam" id="PF01134">
    <property type="entry name" value="GIDA"/>
    <property type="match status" value="1"/>
</dbReference>
<dbReference type="SUPFAM" id="SSF51905">
    <property type="entry name" value="FAD/NAD(P)-binding domain"/>
    <property type="match status" value="1"/>
</dbReference>
<dbReference type="PROSITE" id="PS01281">
    <property type="entry name" value="GIDA_2"/>
    <property type="match status" value="1"/>
</dbReference>
<reference key="1">
    <citation type="journal article" date="2007" name="Science">
        <title>Legumes symbioses: absence of nod genes in photosynthetic bradyrhizobia.</title>
        <authorList>
            <person name="Giraud E."/>
            <person name="Moulin L."/>
            <person name="Vallenet D."/>
            <person name="Barbe V."/>
            <person name="Cytryn E."/>
            <person name="Avarre J.-C."/>
            <person name="Jaubert M."/>
            <person name="Simon D."/>
            <person name="Cartieaux F."/>
            <person name="Prin Y."/>
            <person name="Bena G."/>
            <person name="Hannibal L."/>
            <person name="Fardoux J."/>
            <person name="Kojadinovic M."/>
            <person name="Vuillet L."/>
            <person name="Lajus A."/>
            <person name="Cruveiller S."/>
            <person name="Rouy Z."/>
            <person name="Mangenot S."/>
            <person name="Segurens B."/>
            <person name="Dossat C."/>
            <person name="Franck W.L."/>
            <person name="Chang W.-S."/>
            <person name="Saunders E."/>
            <person name="Bruce D."/>
            <person name="Richardson P."/>
            <person name="Normand P."/>
            <person name="Dreyfus B."/>
            <person name="Pignol D."/>
            <person name="Stacey G."/>
            <person name="Emerich D."/>
            <person name="Vermeglio A."/>
            <person name="Medigue C."/>
            <person name="Sadowsky M."/>
        </authorList>
    </citation>
    <scope>NUCLEOTIDE SEQUENCE [LARGE SCALE GENOMIC DNA]</scope>
    <source>
        <strain>ORS 278</strain>
    </source>
</reference>
<gene>
    <name evidence="1" type="primary">trmFO</name>
    <name type="ordered locus">BRADO4028</name>
</gene>
<accession>A4YV54</accession>
<keyword id="KW-0963">Cytoplasm</keyword>
<keyword id="KW-0274">FAD</keyword>
<keyword id="KW-0285">Flavoprotein</keyword>
<keyword id="KW-0489">Methyltransferase</keyword>
<keyword id="KW-0520">NAD</keyword>
<keyword id="KW-0521">NADP</keyword>
<keyword id="KW-1185">Reference proteome</keyword>
<keyword id="KW-0808">Transferase</keyword>
<keyword id="KW-0819">tRNA processing</keyword>
<sequence>MIGAGLAGSEAAWQLAEAGIDVVLHEMRPDRMTEAHRTATPAELVCSNSFRSDDAANNAVGLLHAEMRRLGSLIMRAADANQVPAGGALAVDRDSFAAAVATALQGHPRIELRRGEITGLPPAEWANVIIATGPLTSQPLADAIRALTDESALAFFDAIAPIVHKDTIDMSKAWFQSRYDKVGPGGTGADYINCPMTREQYDAFVAALLAGEKTDFKDWETNTPYFDGCLPIEVMAERGHETLRHGPMKPVGLTNPHDPTVKPYAIVQLRQDNKLGTLYNMVGFQTKLKYGPQQQIFRTIPGLENAEFARLGGLHRNTFLNSPKLLDQQLRLRAQPRLRFAGQMTGCEGYVESASIGLIAGLYAAAEARGASLAAPPPTTALGALLGHITGGHIETIDGATRSFQPMNINFGLFPPLAAAPTKKPDGTRLKGNEKTVAKKQAMSARALADLDRWIAEHLRVAAAA</sequence>
<evidence type="ECO:0000255" key="1">
    <source>
        <dbReference type="HAMAP-Rule" id="MF_01037"/>
    </source>
</evidence>